<organism>
    <name type="scientific">Streptococcus pyogenes serotype M3 (strain SSI-1)</name>
    <dbReference type="NCBI Taxonomy" id="193567"/>
    <lineage>
        <taxon>Bacteria</taxon>
        <taxon>Bacillati</taxon>
        <taxon>Bacillota</taxon>
        <taxon>Bacilli</taxon>
        <taxon>Lactobacillales</taxon>
        <taxon>Streptococcaceae</taxon>
        <taxon>Streptococcus</taxon>
    </lineage>
</organism>
<name>GPSB_STRPQ</name>
<comment type="function">
    <text evidence="1">Divisome component that associates with the complex late in its assembly, after the Z-ring is formed, and is dependent on DivIC and PBP2B for its recruitment to the divisome. Together with EzrA, is a key component of the system that regulates PBP1 localization during cell cycle progression. Its main role could be the removal of PBP1 from the cell pole after pole maturation is completed. Also contributes to the recruitment of PBP1 to the division complex. Not essential for septum formation.</text>
</comment>
<comment type="subunit">
    <text evidence="1">Forms polymers through the coiled coil domains. Interacts with PBP1, MreC and EzrA.</text>
</comment>
<comment type="subcellular location">
    <subcellularLocation>
        <location evidence="1">Cytoplasm</location>
    </subcellularLocation>
    <text evidence="1">Shuttles between the lateral wall and the division site in a cell cycle-dependent manner.</text>
</comment>
<comment type="similarity">
    <text evidence="1">Belongs to the GpsB family.</text>
</comment>
<reference key="1">
    <citation type="journal article" date="2003" name="Genome Res.">
        <title>Genome sequence of an M3 strain of Streptococcus pyogenes reveals a large-scale genomic rearrangement in invasive strains and new insights into phage evolution.</title>
        <authorList>
            <person name="Nakagawa I."/>
            <person name="Kurokawa K."/>
            <person name="Yamashita A."/>
            <person name="Nakata M."/>
            <person name="Tomiyasu Y."/>
            <person name="Okahashi N."/>
            <person name="Kawabata S."/>
            <person name="Yamazaki K."/>
            <person name="Shiba T."/>
            <person name="Yasunaga T."/>
            <person name="Hayashi H."/>
            <person name="Hattori M."/>
            <person name="Hamada S."/>
        </authorList>
    </citation>
    <scope>NUCLEOTIDE SEQUENCE [LARGE SCALE GENOMIC DNA]</scope>
    <source>
        <strain>SSI-1</strain>
    </source>
</reference>
<keyword id="KW-0131">Cell cycle</keyword>
<keyword id="KW-0132">Cell division</keyword>
<keyword id="KW-0133">Cell shape</keyword>
<keyword id="KW-0175">Coiled coil</keyword>
<keyword id="KW-0963">Cytoplasm</keyword>
<protein>
    <recommendedName>
        <fullName evidence="1">Cell cycle protein GpsB</fullName>
    </recommendedName>
    <alternativeName>
        <fullName evidence="1">Guiding PBP1-shuttling protein</fullName>
    </alternativeName>
</protein>
<gene>
    <name evidence="1" type="primary">gpsB</name>
    <name type="ordered locus">SPs0475</name>
</gene>
<proteinExistence type="inferred from homology"/>
<sequence>MTSIIYSPKDIFEQEFKTSMRGFDKKEVDEFLDNVIKDYENFNAQIEALKAENEALKKAKFQARNTVSATVQQPVPQPTRVAQSATNFDILKRISKLEKEVFGKQIIE</sequence>
<accession>P0DB45</accession>
<accession>Q79Y53</accession>
<accession>Q7CEW0</accession>
<evidence type="ECO:0000255" key="1">
    <source>
        <dbReference type="HAMAP-Rule" id="MF_02011"/>
    </source>
</evidence>
<dbReference type="EMBL" id="BA000034">
    <property type="protein sequence ID" value="BAC63570.1"/>
    <property type="molecule type" value="Genomic_DNA"/>
</dbReference>
<dbReference type="RefSeq" id="WP_002983626.1">
    <property type="nucleotide sequence ID" value="NC_004606.1"/>
</dbReference>
<dbReference type="SMR" id="P0DB45"/>
<dbReference type="GeneID" id="69900485"/>
<dbReference type="KEGG" id="sps:SPs0475"/>
<dbReference type="HOGENOM" id="CLU_140309_1_0_9"/>
<dbReference type="GO" id="GO:0005737">
    <property type="term" value="C:cytoplasm"/>
    <property type="evidence" value="ECO:0007669"/>
    <property type="project" value="UniProtKB-SubCell"/>
</dbReference>
<dbReference type="GO" id="GO:0051301">
    <property type="term" value="P:cell division"/>
    <property type="evidence" value="ECO:0007669"/>
    <property type="project" value="UniProtKB-UniRule"/>
</dbReference>
<dbReference type="GO" id="GO:0008360">
    <property type="term" value="P:regulation of cell shape"/>
    <property type="evidence" value="ECO:0007669"/>
    <property type="project" value="UniProtKB-UniRule"/>
</dbReference>
<dbReference type="Gene3D" id="6.10.250.660">
    <property type="match status" value="1"/>
</dbReference>
<dbReference type="HAMAP" id="MF_02011">
    <property type="entry name" value="GpsB"/>
    <property type="match status" value="1"/>
</dbReference>
<dbReference type="InterPro" id="IPR011229">
    <property type="entry name" value="Cell_cycle_GpsB"/>
</dbReference>
<dbReference type="InterPro" id="IPR019933">
    <property type="entry name" value="DivIVA_domain"/>
</dbReference>
<dbReference type="InterPro" id="IPR007793">
    <property type="entry name" value="DivIVA_fam"/>
</dbReference>
<dbReference type="NCBIfam" id="TIGR03544">
    <property type="entry name" value="DivI1A_domain"/>
    <property type="match status" value="1"/>
</dbReference>
<dbReference type="NCBIfam" id="NF010725">
    <property type="entry name" value="PRK14127.1"/>
    <property type="match status" value="1"/>
</dbReference>
<dbReference type="PANTHER" id="PTHR35794:SF1">
    <property type="entry name" value="CELL CYCLE PROTEIN GPSB"/>
    <property type="match status" value="1"/>
</dbReference>
<dbReference type="PANTHER" id="PTHR35794">
    <property type="entry name" value="CELL DIVISION PROTEIN DIVIVA"/>
    <property type="match status" value="1"/>
</dbReference>
<dbReference type="Pfam" id="PF05103">
    <property type="entry name" value="DivIVA"/>
    <property type="match status" value="1"/>
</dbReference>
<dbReference type="PIRSF" id="PIRSF029938">
    <property type="entry name" value="UCP029938"/>
    <property type="match status" value="1"/>
</dbReference>
<feature type="chain" id="PRO_0000411360" description="Cell cycle protein GpsB">
    <location>
        <begin position="1"/>
        <end position="108"/>
    </location>
</feature>
<feature type="coiled-coil region" evidence="1">
    <location>
        <begin position="32"/>
        <end position="69"/>
    </location>
</feature>